<comment type="function">
    <text evidence="1">Involved in protein export. Participates in an early event of protein translocation (By similarity).</text>
</comment>
<comment type="subcellular location">
    <subcellularLocation>
        <location evidence="1">Cell inner membrane</location>
        <topology evidence="1">Multi-pass membrane protein</topology>
    </subcellularLocation>
</comment>
<comment type="similarity">
    <text evidence="4">Belongs to the SecG family.</text>
</comment>
<organism>
    <name type="scientific">Haemophilus influenzae (strain ATCC 51907 / DSM 11121 / KW20 / Rd)</name>
    <dbReference type="NCBI Taxonomy" id="71421"/>
    <lineage>
        <taxon>Bacteria</taxon>
        <taxon>Pseudomonadati</taxon>
        <taxon>Pseudomonadota</taxon>
        <taxon>Gammaproteobacteria</taxon>
        <taxon>Pasteurellales</taxon>
        <taxon>Pasteurellaceae</taxon>
        <taxon>Haemophilus</taxon>
    </lineage>
</organism>
<name>SECG_HAEIN</name>
<protein>
    <recommendedName>
        <fullName>Protein-export membrane protein SecG</fullName>
    </recommendedName>
</protein>
<feature type="chain" id="PRO_0000157228" description="Protein-export membrane protein SecG">
    <location>
        <begin position="1"/>
        <end position="112"/>
    </location>
</feature>
<feature type="transmembrane region" description="Helical" evidence="2">
    <location>
        <begin position="2"/>
        <end position="22"/>
    </location>
</feature>
<feature type="transmembrane region" description="Helical" evidence="2">
    <location>
        <begin position="51"/>
        <end position="71"/>
    </location>
</feature>
<feature type="region of interest" description="Disordered" evidence="3">
    <location>
        <begin position="92"/>
        <end position="112"/>
    </location>
</feature>
<feature type="compositionally biased region" description="Low complexity" evidence="3">
    <location>
        <begin position="92"/>
        <end position="102"/>
    </location>
</feature>
<feature type="compositionally biased region" description="Basic and acidic residues" evidence="3">
    <location>
        <begin position="103"/>
        <end position="112"/>
    </location>
</feature>
<accession>P44713</accession>
<proteinExistence type="inferred from homology"/>
<gene>
    <name type="primary">secG</name>
    <name type="ordered locus">HI_0445</name>
</gene>
<dbReference type="EMBL" id="L42023">
    <property type="protein sequence ID" value="AAC22104.1"/>
    <property type="molecule type" value="Genomic_DNA"/>
</dbReference>
<dbReference type="PIR" id="H64068">
    <property type="entry name" value="H64068"/>
</dbReference>
<dbReference type="RefSeq" id="NP_438606.1">
    <property type="nucleotide sequence ID" value="NC_000907.1"/>
</dbReference>
<dbReference type="SMR" id="P44713"/>
<dbReference type="STRING" id="71421.HI_0445"/>
<dbReference type="EnsemblBacteria" id="AAC22104">
    <property type="protein sequence ID" value="AAC22104"/>
    <property type="gene ID" value="HI_0445"/>
</dbReference>
<dbReference type="KEGG" id="hin:HI_0445"/>
<dbReference type="PATRIC" id="fig|71421.8.peg.465"/>
<dbReference type="eggNOG" id="COG1314">
    <property type="taxonomic scope" value="Bacteria"/>
</dbReference>
<dbReference type="HOGENOM" id="CLU_094156_2_2_6"/>
<dbReference type="OrthoDB" id="9813947at2"/>
<dbReference type="PhylomeDB" id="P44713"/>
<dbReference type="BioCyc" id="HINF71421:G1GJ1-460-MONOMER"/>
<dbReference type="Proteomes" id="UP000000579">
    <property type="component" value="Chromosome"/>
</dbReference>
<dbReference type="GO" id="GO:0005886">
    <property type="term" value="C:plasma membrane"/>
    <property type="evidence" value="ECO:0000318"/>
    <property type="project" value="GO_Central"/>
</dbReference>
<dbReference type="GO" id="GO:0015450">
    <property type="term" value="F:protein-transporting ATPase activity"/>
    <property type="evidence" value="ECO:0007669"/>
    <property type="project" value="InterPro"/>
</dbReference>
<dbReference type="GO" id="GO:0065002">
    <property type="term" value="P:intracellular protein transmembrane transport"/>
    <property type="evidence" value="ECO:0000318"/>
    <property type="project" value="GO_Central"/>
</dbReference>
<dbReference type="GO" id="GO:0009306">
    <property type="term" value="P:protein secretion"/>
    <property type="evidence" value="ECO:0007669"/>
    <property type="project" value="InterPro"/>
</dbReference>
<dbReference type="GO" id="GO:0043952">
    <property type="term" value="P:protein transport by the Sec complex"/>
    <property type="evidence" value="ECO:0000318"/>
    <property type="project" value="GO_Central"/>
</dbReference>
<dbReference type="InterPro" id="IPR004692">
    <property type="entry name" value="SecG"/>
</dbReference>
<dbReference type="NCBIfam" id="TIGR00810">
    <property type="entry name" value="secG"/>
    <property type="match status" value="1"/>
</dbReference>
<dbReference type="PANTHER" id="PTHR34182">
    <property type="entry name" value="PROTEIN-EXPORT MEMBRANE PROTEIN SECG"/>
    <property type="match status" value="1"/>
</dbReference>
<dbReference type="PANTHER" id="PTHR34182:SF1">
    <property type="entry name" value="PROTEIN-EXPORT MEMBRANE PROTEIN SECG"/>
    <property type="match status" value="1"/>
</dbReference>
<dbReference type="Pfam" id="PF03840">
    <property type="entry name" value="SecG"/>
    <property type="match status" value="1"/>
</dbReference>
<dbReference type="PRINTS" id="PR01651">
    <property type="entry name" value="SECGEXPORT"/>
</dbReference>
<evidence type="ECO:0000250" key="1"/>
<evidence type="ECO:0000255" key="2"/>
<evidence type="ECO:0000256" key="3">
    <source>
        <dbReference type="SAM" id="MobiDB-lite"/>
    </source>
</evidence>
<evidence type="ECO:0000305" key="4"/>
<sequence length="112" mass="11538">MYQVLLFIYVVVAIALIGFILVQQGKGANAGASFGGGASGTMFGSAGAGNFLTRTSAILATAFFVIALVLGNMNSHKGNVQKGTFDDLSQAAEQVQQQAAPAKDNKNSDIPQ</sequence>
<reference key="1">
    <citation type="journal article" date="1995" name="Science">
        <title>Whole-genome random sequencing and assembly of Haemophilus influenzae Rd.</title>
        <authorList>
            <person name="Fleischmann R.D."/>
            <person name="Adams M.D."/>
            <person name="White O."/>
            <person name="Clayton R.A."/>
            <person name="Kirkness E.F."/>
            <person name="Kerlavage A.R."/>
            <person name="Bult C.J."/>
            <person name="Tomb J.-F."/>
            <person name="Dougherty B.A."/>
            <person name="Merrick J.M."/>
            <person name="McKenney K."/>
            <person name="Sutton G.G."/>
            <person name="FitzHugh W."/>
            <person name="Fields C.A."/>
            <person name="Gocayne J.D."/>
            <person name="Scott J.D."/>
            <person name="Shirley R."/>
            <person name="Liu L.-I."/>
            <person name="Glodek A."/>
            <person name="Kelley J.M."/>
            <person name="Weidman J.F."/>
            <person name="Phillips C.A."/>
            <person name="Spriggs T."/>
            <person name="Hedblom E."/>
            <person name="Cotton M.D."/>
            <person name="Utterback T.R."/>
            <person name="Hanna M.C."/>
            <person name="Nguyen D.T."/>
            <person name="Saudek D.M."/>
            <person name="Brandon R.C."/>
            <person name="Fine L.D."/>
            <person name="Fritchman J.L."/>
            <person name="Fuhrmann J.L."/>
            <person name="Geoghagen N.S.M."/>
            <person name="Gnehm C.L."/>
            <person name="McDonald L.A."/>
            <person name="Small K.V."/>
            <person name="Fraser C.M."/>
            <person name="Smith H.O."/>
            <person name="Venter J.C."/>
        </authorList>
    </citation>
    <scope>NUCLEOTIDE SEQUENCE [LARGE SCALE GENOMIC DNA]</scope>
    <source>
        <strain>ATCC 51907 / DSM 11121 / KW20 / Rd</strain>
    </source>
</reference>
<keyword id="KW-0997">Cell inner membrane</keyword>
<keyword id="KW-1003">Cell membrane</keyword>
<keyword id="KW-0472">Membrane</keyword>
<keyword id="KW-0653">Protein transport</keyword>
<keyword id="KW-1185">Reference proteome</keyword>
<keyword id="KW-0811">Translocation</keyword>
<keyword id="KW-0812">Transmembrane</keyword>
<keyword id="KW-1133">Transmembrane helix</keyword>
<keyword id="KW-0813">Transport</keyword>